<dbReference type="EC" id="3.4.23.-"/>
<dbReference type="EC" id="2.7.7.49"/>
<dbReference type="EC" id="3.1.26.13"/>
<dbReference type="EC" id="3.1.13.2"/>
<dbReference type="EC" id="3.6.1.23"/>
<dbReference type="EC" id="2.7.7.-" evidence="2"/>
<dbReference type="EC" id="3.1.-.-" evidence="2"/>
<dbReference type="EMBL" id="M36968">
    <property type="protein sequence ID" value="AAA43076.1"/>
    <property type="molecule type" value="Genomic_RNA"/>
</dbReference>
<dbReference type="SMR" id="P19028"/>
<dbReference type="MEROPS" id="A02.007"/>
<dbReference type="GO" id="GO:0004190">
    <property type="term" value="F:aspartic-type endopeptidase activity"/>
    <property type="evidence" value="ECO:0007669"/>
    <property type="project" value="UniProtKB-KW"/>
</dbReference>
<dbReference type="GO" id="GO:0003677">
    <property type="term" value="F:DNA binding"/>
    <property type="evidence" value="ECO:0007669"/>
    <property type="project" value="UniProtKB-KW"/>
</dbReference>
<dbReference type="GO" id="GO:0004170">
    <property type="term" value="F:dUTP diphosphatase activity"/>
    <property type="evidence" value="ECO:0007669"/>
    <property type="project" value="UniProtKB-EC"/>
</dbReference>
<dbReference type="GO" id="GO:0004533">
    <property type="term" value="F:exoribonuclease H activity"/>
    <property type="evidence" value="ECO:0007669"/>
    <property type="project" value="UniProtKB-EC"/>
</dbReference>
<dbReference type="GO" id="GO:0000287">
    <property type="term" value="F:magnesium ion binding"/>
    <property type="evidence" value="ECO:0007669"/>
    <property type="project" value="InterPro"/>
</dbReference>
<dbReference type="GO" id="GO:0035613">
    <property type="term" value="F:RNA stem-loop binding"/>
    <property type="evidence" value="ECO:0007669"/>
    <property type="project" value="TreeGrafter"/>
</dbReference>
<dbReference type="GO" id="GO:0003964">
    <property type="term" value="F:RNA-directed DNA polymerase activity"/>
    <property type="evidence" value="ECO:0007669"/>
    <property type="project" value="UniProtKB-KW"/>
</dbReference>
<dbReference type="GO" id="GO:0004523">
    <property type="term" value="F:RNA-DNA hybrid ribonuclease activity"/>
    <property type="evidence" value="ECO:0007669"/>
    <property type="project" value="InterPro"/>
</dbReference>
<dbReference type="GO" id="GO:0008270">
    <property type="term" value="F:zinc ion binding"/>
    <property type="evidence" value="ECO:0007669"/>
    <property type="project" value="UniProtKB-KW"/>
</dbReference>
<dbReference type="GO" id="GO:0015074">
    <property type="term" value="P:DNA integration"/>
    <property type="evidence" value="ECO:0007669"/>
    <property type="project" value="UniProtKB-KW"/>
</dbReference>
<dbReference type="GO" id="GO:0006310">
    <property type="term" value="P:DNA recombination"/>
    <property type="evidence" value="ECO:0007669"/>
    <property type="project" value="UniProtKB-KW"/>
</dbReference>
<dbReference type="GO" id="GO:0006226">
    <property type="term" value="P:dUMP biosynthetic process"/>
    <property type="evidence" value="ECO:0007669"/>
    <property type="project" value="InterPro"/>
</dbReference>
<dbReference type="GO" id="GO:0046081">
    <property type="term" value="P:dUTP catabolic process"/>
    <property type="evidence" value="ECO:0007669"/>
    <property type="project" value="InterPro"/>
</dbReference>
<dbReference type="GO" id="GO:0075713">
    <property type="term" value="P:establishment of integrated proviral latency"/>
    <property type="evidence" value="ECO:0007669"/>
    <property type="project" value="UniProtKB-KW"/>
</dbReference>
<dbReference type="GO" id="GO:0006508">
    <property type="term" value="P:proteolysis"/>
    <property type="evidence" value="ECO:0007669"/>
    <property type="project" value="UniProtKB-KW"/>
</dbReference>
<dbReference type="GO" id="GO:0046718">
    <property type="term" value="P:symbiont entry into host cell"/>
    <property type="evidence" value="ECO:0007669"/>
    <property type="project" value="UniProtKB-KW"/>
</dbReference>
<dbReference type="GO" id="GO:0044826">
    <property type="term" value="P:viral genome integration into host DNA"/>
    <property type="evidence" value="ECO:0007669"/>
    <property type="project" value="UniProtKB-KW"/>
</dbReference>
<dbReference type="CDD" id="cd05482">
    <property type="entry name" value="HIV_retropepsin_like"/>
    <property type="match status" value="1"/>
</dbReference>
<dbReference type="CDD" id="cd07557">
    <property type="entry name" value="trimeric_dUTPase"/>
    <property type="match status" value="1"/>
</dbReference>
<dbReference type="Gene3D" id="1.10.10.200">
    <property type="match status" value="1"/>
</dbReference>
<dbReference type="Gene3D" id="2.70.40.10">
    <property type="match status" value="1"/>
</dbReference>
<dbReference type="Gene3D" id="3.30.70.270">
    <property type="match status" value="3"/>
</dbReference>
<dbReference type="Gene3D" id="2.40.70.10">
    <property type="entry name" value="Acid Proteases"/>
    <property type="match status" value="1"/>
</dbReference>
<dbReference type="Gene3D" id="3.10.10.10">
    <property type="entry name" value="HIV Type 1 Reverse Transcriptase, subunit A, domain 1"/>
    <property type="match status" value="1"/>
</dbReference>
<dbReference type="Gene3D" id="2.30.30.10">
    <property type="entry name" value="Integrase, C-terminal domain superfamily, retroviral"/>
    <property type="match status" value="1"/>
</dbReference>
<dbReference type="Gene3D" id="3.30.420.10">
    <property type="entry name" value="Ribonuclease H-like superfamily/Ribonuclease H"/>
    <property type="match status" value="2"/>
</dbReference>
<dbReference type="InterPro" id="IPR001969">
    <property type="entry name" value="Aspartic_peptidase_AS"/>
</dbReference>
<dbReference type="InterPro" id="IPR043502">
    <property type="entry name" value="DNA/RNA_pol_sf"/>
</dbReference>
<dbReference type="InterPro" id="IPR008181">
    <property type="entry name" value="dUTPase"/>
</dbReference>
<dbReference type="InterPro" id="IPR029054">
    <property type="entry name" value="dUTPase-like"/>
</dbReference>
<dbReference type="InterPro" id="IPR036157">
    <property type="entry name" value="dUTPase-like_sf"/>
</dbReference>
<dbReference type="InterPro" id="IPR033704">
    <property type="entry name" value="dUTPase_trimeric"/>
</dbReference>
<dbReference type="InterPro" id="IPR017856">
    <property type="entry name" value="Integrase-like_N"/>
</dbReference>
<dbReference type="InterPro" id="IPR036862">
    <property type="entry name" value="Integrase_C_dom_sf_retrovir"/>
</dbReference>
<dbReference type="InterPro" id="IPR001037">
    <property type="entry name" value="Integrase_C_retrovir"/>
</dbReference>
<dbReference type="InterPro" id="IPR001584">
    <property type="entry name" value="Integrase_cat-core"/>
</dbReference>
<dbReference type="InterPro" id="IPR003308">
    <property type="entry name" value="Integrase_Zn-bd_dom_N"/>
</dbReference>
<dbReference type="InterPro" id="IPR001995">
    <property type="entry name" value="Peptidase_A2_cat"/>
</dbReference>
<dbReference type="InterPro" id="IPR021109">
    <property type="entry name" value="Peptidase_aspartic_dom_sf"/>
</dbReference>
<dbReference type="InterPro" id="IPR034170">
    <property type="entry name" value="Retropepsin-like_cat_dom"/>
</dbReference>
<dbReference type="InterPro" id="IPR018061">
    <property type="entry name" value="Retropepsins"/>
</dbReference>
<dbReference type="InterPro" id="IPR043128">
    <property type="entry name" value="Rev_trsase/Diguanyl_cyclase"/>
</dbReference>
<dbReference type="InterPro" id="IPR012337">
    <property type="entry name" value="RNaseH-like_sf"/>
</dbReference>
<dbReference type="InterPro" id="IPR002156">
    <property type="entry name" value="RNaseH_domain"/>
</dbReference>
<dbReference type="InterPro" id="IPR036397">
    <property type="entry name" value="RNaseH_sf"/>
</dbReference>
<dbReference type="InterPro" id="IPR000477">
    <property type="entry name" value="RT_dom"/>
</dbReference>
<dbReference type="InterPro" id="IPR010659">
    <property type="entry name" value="RVT_connect"/>
</dbReference>
<dbReference type="InterPro" id="IPR010661">
    <property type="entry name" value="RVT_thumb"/>
</dbReference>
<dbReference type="NCBIfam" id="TIGR00576">
    <property type="entry name" value="dut"/>
    <property type="match status" value="1"/>
</dbReference>
<dbReference type="PANTHER" id="PTHR41694">
    <property type="entry name" value="ENDOGENOUS RETROVIRUS GROUP K MEMBER POL PROTEIN"/>
    <property type="match status" value="1"/>
</dbReference>
<dbReference type="PANTHER" id="PTHR41694:SF3">
    <property type="entry name" value="RNA-DIRECTED DNA POLYMERASE-RELATED"/>
    <property type="match status" value="1"/>
</dbReference>
<dbReference type="Pfam" id="PF00692">
    <property type="entry name" value="dUTPase"/>
    <property type="match status" value="1"/>
</dbReference>
<dbReference type="Pfam" id="PF00552">
    <property type="entry name" value="IN_DBD_C"/>
    <property type="match status" value="1"/>
</dbReference>
<dbReference type="Pfam" id="PF02022">
    <property type="entry name" value="Integrase_Zn"/>
    <property type="match status" value="1"/>
</dbReference>
<dbReference type="Pfam" id="PF00075">
    <property type="entry name" value="RNase_H"/>
    <property type="match status" value="1"/>
</dbReference>
<dbReference type="Pfam" id="PF00665">
    <property type="entry name" value="rve"/>
    <property type="match status" value="1"/>
</dbReference>
<dbReference type="Pfam" id="PF00077">
    <property type="entry name" value="RVP"/>
    <property type="match status" value="1"/>
</dbReference>
<dbReference type="Pfam" id="PF00078">
    <property type="entry name" value="RVT_1"/>
    <property type="match status" value="1"/>
</dbReference>
<dbReference type="Pfam" id="PF06815">
    <property type="entry name" value="RVT_connect"/>
    <property type="match status" value="1"/>
</dbReference>
<dbReference type="Pfam" id="PF06817">
    <property type="entry name" value="RVT_thumb"/>
    <property type="match status" value="1"/>
</dbReference>
<dbReference type="SUPFAM" id="SSF50630">
    <property type="entry name" value="Acid proteases"/>
    <property type="match status" value="1"/>
</dbReference>
<dbReference type="SUPFAM" id="SSF50122">
    <property type="entry name" value="DNA-binding domain of retroviral integrase"/>
    <property type="match status" value="1"/>
</dbReference>
<dbReference type="SUPFAM" id="SSF56672">
    <property type="entry name" value="DNA/RNA polymerases"/>
    <property type="match status" value="1"/>
</dbReference>
<dbReference type="SUPFAM" id="SSF51283">
    <property type="entry name" value="dUTPase-like"/>
    <property type="match status" value="1"/>
</dbReference>
<dbReference type="SUPFAM" id="SSF46919">
    <property type="entry name" value="N-terminal Zn binding domain of HIV integrase"/>
    <property type="match status" value="1"/>
</dbReference>
<dbReference type="SUPFAM" id="SSF53098">
    <property type="entry name" value="Ribonuclease H-like"/>
    <property type="match status" value="2"/>
</dbReference>
<dbReference type="PROSITE" id="PS50175">
    <property type="entry name" value="ASP_PROT_RETROV"/>
    <property type="match status" value="1"/>
</dbReference>
<dbReference type="PROSITE" id="PS00141">
    <property type="entry name" value="ASP_PROTEASE"/>
    <property type="match status" value="1"/>
</dbReference>
<dbReference type="PROSITE" id="PS50994">
    <property type="entry name" value="INTEGRASE"/>
    <property type="match status" value="1"/>
</dbReference>
<dbReference type="PROSITE" id="PS51027">
    <property type="entry name" value="INTEGRASE_DBD"/>
    <property type="match status" value="1"/>
</dbReference>
<dbReference type="PROSITE" id="PS50879">
    <property type="entry name" value="RNASE_H_1"/>
    <property type="match status" value="1"/>
</dbReference>
<dbReference type="PROSITE" id="PS50878">
    <property type="entry name" value="RT_POL"/>
    <property type="match status" value="1"/>
</dbReference>
<dbReference type="PROSITE" id="PS50876">
    <property type="entry name" value="ZF_INTEGRASE"/>
    <property type="match status" value="1"/>
</dbReference>
<accession>P19028</accession>
<name>POL_FIVSD</name>
<comment type="function">
    <text>During replicative cycle of retroviruses, the reverse-transcribed viral DNA is integrated into the host chromosome by the viral integrase enzyme. RNase H activity is associated with the reverse transcriptase.</text>
</comment>
<comment type="catalytic activity">
    <reaction>
        <text>Endohydrolysis of RNA in RNA/DNA hybrids. Three different cleavage modes: 1. sequence-specific internal cleavage of RNA. Human immunodeficiency virus type 1 and Moloney murine leukemia virus enzymes prefer to cleave the RNA strand one nucleotide away from the RNA-DNA junction. 2. RNA 5'-end directed cleavage 13-19 nucleotides from the RNA end. 3. DNA 3'-end directed cleavage 15-20 nucleotides away from the primer terminus.</text>
        <dbReference type="EC" id="3.1.26.13"/>
    </reaction>
</comment>
<comment type="catalytic activity">
    <reaction>
        <text>3'-end directed exonucleolytic cleavage of viral RNA-DNA hybrid.</text>
        <dbReference type="EC" id="3.1.13.2"/>
    </reaction>
</comment>
<comment type="catalytic activity">
    <reaction>
        <text>dUTP + H2O = dUMP + diphosphate + H(+)</text>
        <dbReference type="Rhea" id="RHEA:10248"/>
        <dbReference type="ChEBI" id="CHEBI:15377"/>
        <dbReference type="ChEBI" id="CHEBI:15378"/>
        <dbReference type="ChEBI" id="CHEBI:33019"/>
        <dbReference type="ChEBI" id="CHEBI:61555"/>
        <dbReference type="ChEBI" id="CHEBI:246422"/>
        <dbReference type="EC" id="3.6.1.23"/>
    </reaction>
</comment>
<comment type="catalytic activity">
    <reaction evidence="4">
        <text>DNA(n) + a 2'-deoxyribonucleoside 5'-triphosphate = DNA(n+1) + diphosphate</text>
        <dbReference type="Rhea" id="RHEA:22508"/>
        <dbReference type="Rhea" id="RHEA-COMP:17339"/>
        <dbReference type="Rhea" id="RHEA-COMP:17340"/>
        <dbReference type="ChEBI" id="CHEBI:33019"/>
        <dbReference type="ChEBI" id="CHEBI:61560"/>
        <dbReference type="ChEBI" id="CHEBI:173112"/>
        <dbReference type="EC" id="2.7.7.49"/>
    </reaction>
</comment>
<comment type="PTM">
    <text>Cleavage sites that yield the mature proteins remain to be determined.</text>
</comment>
<comment type="similarity">
    <text evidence="10">Belongs to the retroviral Pol polyprotein family.</text>
</comment>
<comment type="caution">
    <text evidence="10">The N-terminus of the polypeptide is uncertain.</text>
</comment>
<sequence>KKFGKLEGGASCSPSESSAANSNAICTSNGGKIIGFINYNKVGTTTSLEKRPEILIFVNGYPIKFLLDTGADITILNRRDFQVKNSIENGRQNMIGVGGGKRGTNYINVHLEIRDENYKTQCIFGNVCVLEDNSLIQPLLGRDNMIKFNIRLVMAQISDKIPIVKVKMKDPNKGPQIKQWPLSNEKIEALTEIVERLEREGKVKRADPNNPWNTPVFAIKKKSGKWRMLIDFRELNKLTEKGAEVQLGLPHPAGLQMKKQITVLDIGDAYFTNPLDPDYAPYTAFTLPRKNNAGPGRRFVWCSLPQGWILSPLIYQSTLDNIIQPFIRQNPQLDIYQYMDDIYIGSNLSKKEHKEKVEELRKLLLWWGFETPEDKLQEEPPYKWMGYELHPLTWTIQQKQLEIPEKPTLNELQKLAGKINWASQTIPELSIKSLTNMTRGNQNLNSTREWTEEARLEVQKAKRAIEEQVQLGYYDPSKELYAKLSLVGPHQISYQVYQKCPEKILWYGKMSRQKKKAENTCDIALRACYKIREESIIRIGKEPRYEIPTSREAWESNLINSPYLKAPPPEVDYIHAALNIKRALSMIKDPPISGAETWYIDGGRKLGKAAKAAYWTDTGKWQVMELEGSNQKAEIQALLLALKAGPEEMNIITDSQYMINILSQQPDKMEGIWQEVLEELEKKTAIFIDWVPGHKGIPGNEEVDKLCQTMMIIEGDGILDKRTEDAGYDLLAAKEIHLLPGEVKVIPTGVKLMLPKGHWGLIMGKSSIGSKGLDVLGGVIDEGYRGEIGVIMINLSKKSITLLEQQKIAQLIILPHKHEALEQGKVVMDSERGEKGYGSTGVFSSWVDRIEEAETNHEKFHSDPQYLRTEFNLPKMVAEEIRRKCPVCRIRGEQVGGQLKIGPGIWQMDCTHFDGKIILVAIHVESGYIWAQIISQETADCTVKAVLQLLSAHIVTELQTDNGPNFKNQKMEGVLNYMGVKHKFGIPGNPQSQALVENVNQTLKVWVHKFLPETTSLDNALALAVHCLNFKQRGRIGGMAPYELLAQQESLRIQDYFSAIPQKLQAQWIYYKDQKDKKWKGPMRVEYWGQGSVLLKDEEKGYFLIPRRHVKRVPEPCALPEGDE</sequence>
<organism>
    <name type="scientific">Feline immunodeficiency virus (strain San Diego)</name>
    <name type="common">FIV</name>
    <dbReference type="NCBI Taxonomy" id="11675"/>
    <lineage>
        <taxon>Viruses</taxon>
        <taxon>Riboviria</taxon>
        <taxon>Pararnavirae</taxon>
        <taxon>Artverviricota</taxon>
        <taxon>Revtraviricetes</taxon>
        <taxon>Ortervirales</taxon>
        <taxon>Retroviridae</taxon>
        <taxon>Orthoretrovirinae</taxon>
        <taxon>Lentivirus</taxon>
        <taxon>Feline immunodeficiency virus</taxon>
    </lineage>
</organism>
<evidence type="ECO:0000250" key="1"/>
<evidence type="ECO:0000250" key="2">
    <source>
        <dbReference type="UniProtKB" id="P04585"/>
    </source>
</evidence>
<evidence type="ECO:0000255" key="3">
    <source>
        <dbReference type="PROSITE-ProRule" id="PRU00275"/>
    </source>
</evidence>
<evidence type="ECO:0000255" key="4">
    <source>
        <dbReference type="PROSITE-ProRule" id="PRU00405"/>
    </source>
</evidence>
<evidence type="ECO:0000255" key="5">
    <source>
        <dbReference type="PROSITE-ProRule" id="PRU00408"/>
    </source>
</evidence>
<evidence type="ECO:0000255" key="6">
    <source>
        <dbReference type="PROSITE-ProRule" id="PRU00450"/>
    </source>
</evidence>
<evidence type="ECO:0000255" key="7">
    <source>
        <dbReference type="PROSITE-ProRule" id="PRU00457"/>
    </source>
</evidence>
<evidence type="ECO:0000255" key="8">
    <source>
        <dbReference type="PROSITE-ProRule" id="PRU00506"/>
    </source>
</evidence>
<evidence type="ECO:0000255" key="9">
    <source>
        <dbReference type="PROSITE-ProRule" id="PRU10094"/>
    </source>
</evidence>
<evidence type="ECO:0000305" key="10"/>
<gene>
    <name type="primary">pol</name>
</gene>
<organismHost>
    <name type="scientific">Felidae</name>
    <name type="common">cat family</name>
    <dbReference type="NCBI Taxonomy" id="9681"/>
</organismHost>
<feature type="chain" id="PRO_0000038845" description="Protease" evidence="1">
    <location>
        <begin position="1"/>
        <end position="154"/>
    </location>
</feature>
<feature type="chain" id="PRO_0000038846" description="Reverse transcriptase/ribonuclease H" evidence="1">
    <location>
        <begin position="155"/>
        <end position="710"/>
    </location>
</feature>
<feature type="chain" id="PRO_0000038847" description="Deoxyuridine 5'-triphosphate nucleotidohydrolase" evidence="1">
    <location>
        <begin position="711"/>
        <end position="843"/>
    </location>
</feature>
<feature type="chain" id="PRO_0000038848" description="Integrase" evidence="1">
    <location>
        <begin position="844"/>
        <end position="1124"/>
    </location>
</feature>
<feature type="domain" description="Peptidase A2" evidence="3">
    <location>
        <begin position="63"/>
        <end position="144"/>
    </location>
</feature>
<feature type="domain" description="Reverse transcriptase" evidence="4">
    <location>
        <begin position="200"/>
        <end position="389"/>
    </location>
</feature>
<feature type="domain" description="RNase H type-1" evidence="5">
    <location>
        <begin position="592"/>
        <end position="712"/>
    </location>
</feature>
<feature type="domain" description="Integrase catalytic" evidence="7">
    <location>
        <begin position="899"/>
        <end position="1049"/>
    </location>
</feature>
<feature type="zinc finger region" description="Integrase-type" evidence="6">
    <location>
        <begin position="848"/>
        <end position="889"/>
    </location>
</feature>
<feature type="DNA-binding region" description="Integrase-type" evidence="8">
    <location>
        <begin position="1067"/>
        <end position="1115"/>
    </location>
</feature>
<feature type="active site" description="For protease activity" evidence="9">
    <location>
        <position position="68"/>
    </location>
</feature>
<feature type="binding site" evidence="5">
    <location>
        <position position="601"/>
    </location>
    <ligand>
        <name>Mg(2+)</name>
        <dbReference type="ChEBI" id="CHEBI:18420"/>
        <label>1</label>
    </ligand>
</feature>
<feature type="binding site" evidence="5">
    <location>
        <position position="601"/>
    </location>
    <ligand>
        <name>Mg(2+)</name>
        <dbReference type="ChEBI" id="CHEBI:18420"/>
        <label>2</label>
    </ligand>
</feature>
<feature type="binding site" evidence="5">
    <location>
        <position position="634"/>
    </location>
    <ligand>
        <name>Mg(2+)</name>
        <dbReference type="ChEBI" id="CHEBI:18420"/>
        <label>1</label>
    </ligand>
</feature>
<feature type="binding site" evidence="5">
    <location>
        <position position="654"/>
    </location>
    <ligand>
        <name>Mg(2+)</name>
        <dbReference type="ChEBI" id="CHEBI:18420"/>
        <label>1</label>
    </ligand>
</feature>
<feature type="binding site" evidence="5">
    <location>
        <position position="704"/>
    </location>
    <ligand>
        <name>Mg(2+)</name>
        <dbReference type="ChEBI" id="CHEBI:18420"/>
        <label>2</label>
    </ligand>
</feature>
<feature type="binding site" evidence="6">
    <location>
        <position position="857"/>
    </location>
    <ligand>
        <name>Zn(2+)</name>
        <dbReference type="ChEBI" id="CHEBI:29105"/>
    </ligand>
</feature>
<feature type="binding site" evidence="6">
    <location>
        <position position="861"/>
    </location>
    <ligand>
        <name>Zn(2+)</name>
        <dbReference type="ChEBI" id="CHEBI:29105"/>
    </ligand>
</feature>
<feature type="binding site" evidence="6">
    <location>
        <position position="885"/>
    </location>
    <ligand>
        <name>Zn(2+)</name>
        <dbReference type="ChEBI" id="CHEBI:29105"/>
    </ligand>
</feature>
<feature type="binding site" evidence="6">
    <location>
        <position position="888"/>
    </location>
    <ligand>
        <name>Zn(2+)</name>
        <dbReference type="ChEBI" id="CHEBI:29105"/>
    </ligand>
</feature>
<keyword id="KW-0064">Aspartyl protease</keyword>
<keyword id="KW-0229">DNA integration</keyword>
<keyword id="KW-0233">DNA recombination</keyword>
<keyword id="KW-0238">DNA-binding</keyword>
<keyword id="KW-0255">Endonuclease</keyword>
<keyword id="KW-0378">Hydrolase</keyword>
<keyword id="KW-0479">Metal-binding</keyword>
<keyword id="KW-0511">Multifunctional enzyme</keyword>
<keyword id="KW-0540">Nuclease</keyword>
<keyword id="KW-0546">Nucleotide metabolism</keyword>
<keyword id="KW-0548">Nucleotidyltransferase</keyword>
<keyword id="KW-0645">Protease</keyword>
<keyword id="KW-0695">RNA-directed DNA polymerase</keyword>
<keyword id="KW-0808">Transferase</keyword>
<keyword id="KW-1179">Viral genome integration</keyword>
<keyword id="KW-1160">Virus entry into host cell</keyword>
<keyword id="KW-0862">Zinc</keyword>
<keyword id="KW-0863">Zinc-finger</keyword>
<reference key="1">
    <citation type="journal article" date="1990" name="J. Virol.">
        <title>Comparison of two host cell range variants of feline immunodeficiency virus.</title>
        <authorList>
            <person name="Phillips T.R."/>
            <person name="Talbott R.L."/>
            <person name="Lamont C."/>
            <person name="Muir S."/>
            <person name="Lovelace K.M."/>
            <person name="Elder J.H."/>
        </authorList>
    </citation>
    <scope>NUCLEOTIDE SEQUENCE [GENOMIC RNA]</scope>
    <source>
        <strain>Isolate PPR</strain>
    </source>
</reference>
<protein>
    <recommendedName>
        <fullName>Pol polyprotein</fullName>
    </recommendedName>
    <component>
        <recommendedName>
            <fullName>Protease</fullName>
            <ecNumber>3.4.23.-</ecNumber>
        </recommendedName>
        <alternativeName>
            <fullName>Retropepsin</fullName>
        </alternativeName>
    </component>
    <component>
        <recommendedName>
            <fullName>Reverse transcriptase/ribonuclease H</fullName>
            <shortName>RT</shortName>
            <ecNumber>2.7.7.49</ecNumber>
            <ecNumber>3.1.26.13</ecNumber>
        </recommendedName>
        <alternativeName>
            <fullName>Exoribonuclease H</fullName>
            <ecNumber>3.1.13.2</ecNumber>
        </alternativeName>
    </component>
    <component>
        <recommendedName>
            <fullName>Deoxyuridine 5'-triphosphate nucleotidohydrolase</fullName>
            <shortName>dUTPase</shortName>
            <ecNumber>3.6.1.23</ecNumber>
        </recommendedName>
    </component>
    <component>
        <recommendedName>
            <fullName>Integrase</fullName>
            <shortName>IN</shortName>
            <ecNumber evidence="2">2.7.7.-</ecNumber>
            <ecNumber evidence="2">3.1.-.-</ecNumber>
        </recommendedName>
    </component>
</protein>
<proteinExistence type="inferred from homology"/>